<comment type="function">
    <text evidence="1">IGPS catalyzes the conversion of PRFAR and glutamine to IGP, AICAR and glutamate. The HisF subunit catalyzes the cyclization activity that produces IGP and AICAR from PRFAR using the ammonia provided by the HisH subunit (By similarity).</text>
</comment>
<comment type="catalytic activity">
    <reaction>
        <text>5-[(5-phospho-1-deoxy-D-ribulos-1-ylimino)methylamino]-1-(5-phospho-beta-D-ribosyl)imidazole-4-carboxamide + L-glutamine = D-erythro-1-(imidazol-4-yl)glycerol 3-phosphate + 5-amino-1-(5-phospho-beta-D-ribosyl)imidazole-4-carboxamide + L-glutamate + H(+)</text>
        <dbReference type="Rhea" id="RHEA:24793"/>
        <dbReference type="ChEBI" id="CHEBI:15378"/>
        <dbReference type="ChEBI" id="CHEBI:29985"/>
        <dbReference type="ChEBI" id="CHEBI:58278"/>
        <dbReference type="ChEBI" id="CHEBI:58359"/>
        <dbReference type="ChEBI" id="CHEBI:58475"/>
        <dbReference type="ChEBI" id="CHEBI:58525"/>
        <dbReference type="EC" id="4.3.2.10"/>
    </reaction>
</comment>
<comment type="pathway">
    <text>Amino-acid biosynthesis; L-histidine biosynthesis; L-histidine from 5-phospho-alpha-D-ribose 1-diphosphate: step 5/9.</text>
</comment>
<comment type="subunit">
    <text evidence="1">Heterodimer of HisH and HisF.</text>
</comment>
<comment type="subcellular location">
    <subcellularLocation>
        <location evidence="1">Cytoplasm</location>
    </subcellularLocation>
</comment>
<comment type="similarity">
    <text evidence="3">Belongs to the HisA/HisF family.</text>
</comment>
<evidence type="ECO:0000250" key="1"/>
<evidence type="ECO:0000255" key="2"/>
<evidence type="ECO:0000305" key="3"/>
<feature type="chain" id="PRO_0000142215" description="Imidazole glycerol phosphate synthase subunit HisF">
    <location>
        <begin position="1"/>
        <end position="256"/>
    </location>
</feature>
<feature type="active site" evidence="2">
    <location>
        <position position="11"/>
    </location>
</feature>
<feature type="active site" evidence="2">
    <location>
        <position position="130"/>
    </location>
</feature>
<organism>
    <name type="scientific">Ralstonia nicotianae (strain ATCC BAA-1114 / GMI1000)</name>
    <name type="common">Ralstonia solanacearum</name>
    <dbReference type="NCBI Taxonomy" id="267608"/>
    <lineage>
        <taxon>Bacteria</taxon>
        <taxon>Pseudomonadati</taxon>
        <taxon>Pseudomonadota</taxon>
        <taxon>Betaproteobacteria</taxon>
        <taxon>Burkholderiales</taxon>
        <taxon>Burkholderiaceae</taxon>
        <taxon>Ralstonia</taxon>
        <taxon>Ralstonia solanacearum species complex</taxon>
    </lineage>
</organism>
<reference key="1">
    <citation type="journal article" date="2002" name="Nature">
        <title>Genome sequence of the plant pathogen Ralstonia solanacearum.</title>
        <authorList>
            <person name="Salanoubat M."/>
            <person name="Genin S."/>
            <person name="Artiguenave F."/>
            <person name="Gouzy J."/>
            <person name="Mangenot S."/>
            <person name="Arlat M."/>
            <person name="Billault A."/>
            <person name="Brottier P."/>
            <person name="Camus J.-C."/>
            <person name="Cattolico L."/>
            <person name="Chandler M."/>
            <person name="Choisne N."/>
            <person name="Claudel-Renard C."/>
            <person name="Cunnac S."/>
            <person name="Demange N."/>
            <person name="Gaspin C."/>
            <person name="Lavie M."/>
            <person name="Moisan A."/>
            <person name="Robert C."/>
            <person name="Saurin W."/>
            <person name="Schiex T."/>
            <person name="Siguier P."/>
            <person name="Thebault P."/>
            <person name="Whalen M."/>
            <person name="Wincker P."/>
            <person name="Levy M."/>
            <person name="Weissenbach J."/>
            <person name="Boucher C.A."/>
        </authorList>
    </citation>
    <scope>NUCLEOTIDE SEQUENCE [LARGE SCALE GENOMIC DNA]</scope>
    <source>
        <strain>ATCC BAA-1114 / GMI1000</strain>
    </source>
</reference>
<protein>
    <recommendedName>
        <fullName>Imidazole glycerol phosphate synthase subunit HisF</fullName>
        <ecNumber>4.3.2.10</ecNumber>
    </recommendedName>
    <alternativeName>
        <fullName>IGP synthase cyclase subunit</fullName>
    </alternativeName>
    <alternativeName>
        <fullName>IGP synthase subunit HisF</fullName>
    </alternativeName>
    <alternativeName>
        <fullName>ImGP synthase subunit HisF</fullName>
        <shortName>IGPS subunit HisF</shortName>
    </alternativeName>
</protein>
<sequence>MLAKRIIPCLDVTNGRVVKGVNFVELRDAGDPVEIARRYDEQGADEITFLDITATSDGRDLILHIIEAVASQVFIPLTVGGGVRALEDVRRLLNAGADKISMNSSAVANPQLVSDASARHGAQCIVVAIDAKKVSADGEPPRWEVFTHGGRKATGLDAVAWAREMARRGAGEILLTSMDRDGTKSGFDLELTRAVSDAVPVPVIASGGVGNLQHLADGIKLGHADAVLAASIFHYGEHTVGEAKRFMAQQDIPVRM</sequence>
<accession>Q8XV85</accession>
<name>HIS6_RALN1</name>
<gene>
    <name type="primary">hisF</name>
    <name type="ordered locus">RSc2946</name>
    <name type="ORF">RS00140</name>
</gene>
<keyword id="KW-0028">Amino-acid biosynthesis</keyword>
<keyword id="KW-0963">Cytoplasm</keyword>
<keyword id="KW-0368">Histidine biosynthesis</keyword>
<keyword id="KW-0456">Lyase</keyword>
<keyword id="KW-1185">Reference proteome</keyword>
<dbReference type="EC" id="4.3.2.10"/>
<dbReference type="EMBL" id="AL646052">
    <property type="protein sequence ID" value="CAD16653.1"/>
    <property type="molecule type" value="Genomic_DNA"/>
</dbReference>
<dbReference type="RefSeq" id="WP_011002851.1">
    <property type="nucleotide sequence ID" value="NC_003295.1"/>
</dbReference>
<dbReference type="SMR" id="Q8XV85"/>
<dbReference type="STRING" id="267608.RSc2946"/>
<dbReference type="EnsemblBacteria" id="CAD16653">
    <property type="protein sequence ID" value="CAD16653"/>
    <property type="gene ID" value="RSc2946"/>
</dbReference>
<dbReference type="GeneID" id="93851253"/>
<dbReference type="KEGG" id="rso:RSc2946"/>
<dbReference type="eggNOG" id="COG0107">
    <property type="taxonomic scope" value="Bacteria"/>
</dbReference>
<dbReference type="HOGENOM" id="CLU_048577_4_0_4"/>
<dbReference type="UniPathway" id="UPA00031">
    <property type="reaction ID" value="UER00010"/>
</dbReference>
<dbReference type="Proteomes" id="UP000001436">
    <property type="component" value="Chromosome"/>
</dbReference>
<dbReference type="GO" id="GO:0005737">
    <property type="term" value="C:cytoplasm"/>
    <property type="evidence" value="ECO:0007669"/>
    <property type="project" value="UniProtKB-SubCell"/>
</dbReference>
<dbReference type="GO" id="GO:0000107">
    <property type="term" value="F:imidazoleglycerol-phosphate synthase activity"/>
    <property type="evidence" value="ECO:0007669"/>
    <property type="project" value="UniProtKB-UniRule"/>
</dbReference>
<dbReference type="GO" id="GO:0016829">
    <property type="term" value="F:lyase activity"/>
    <property type="evidence" value="ECO:0007669"/>
    <property type="project" value="UniProtKB-KW"/>
</dbReference>
<dbReference type="GO" id="GO:0000105">
    <property type="term" value="P:L-histidine biosynthetic process"/>
    <property type="evidence" value="ECO:0007669"/>
    <property type="project" value="UniProtKB-UniRule"/>
</dbReference>
<dbReference type="CDD" id="cd04731">
    <property type="entry name" value="HisF"/>
    <property type="match status" value="1"/>
</dbReference>
<dbReference type="FunFam" id="3.20.20.70:FF:000006">
    <property type="entry name" value="Imidazole glycerol phosphate synthase subunit HisF"/>
    <property type="match status" value="1"/>
</dbReference>
<dbReference type="Gene3D" id="3.20.20.70">
    <property type="entry name" value="Aldolase class I"/>
    <property type="match status" value="1"/>
</dbReference>
<dbReference type="HAMAP" id="MF_01013">
    <property type="entry name" value="HisF"/>
    <property type="match status" value="1"/>
</dbReference>
<dbReference type="InterPro" id="IPR013785">
    <property type="entry name" value="Aldolase_TIM"/>
</dbReference>
<dbReference type="InterPro" id="IPR006062">
    <property type="entry name" value="His_biosynth"/>
</dbReference>
<dbReference type="InterPro" id="IPR004651">
    <property type="entry name" value="HisF"/>
</dbReference>
<dbReference type="InterPro" id="IPR050064">
    <property type="entry name" value="IGPS_HisA/HisF"/>
</dbReference>
<dbReference type="InterPro" id="IPR011060">
    <property type="entry name" value="RibuloseP-bd_barrel"/>
</dbReference>
<dbReference type="NCBIfam" id="TIGR00735">
    <property type="entry name" value="hisF"/>
    <property type="match status" value="1"/>
</dbReference>
<dbReference type="PANTHER" id="PTHR21235:SF2">
    <property type="entry name" value="IMIDAZOLE GLYCEROL PHOSPHATE SYNTHASE HISHF"/>
    <property type="match status" value="1"/>
</dbReference>
<dbReference type="PANTHER" id="PTHR21235">
    <property type="entry name" value="IMIDAZOLE GLYCEROL PHOSPHATE SYNTHASE SUBUNIT HISF/H IGP SYNTHASE SUBUNIT HISF/H"/>
    <property type="match status" value="1"/>
</dbReference>
<dbReference type="Pfam" id="PF00977">
    <property type="entry name" value="His_biosynth"/>
    <property type="match status" value="1"/>
</dbReference>
<dbReference type="SUPFAM" id="SSF51366">
    <property type="entry name" value="Ribulose-phoshate binding barrel"/>
    <property type="match status" value="1"/>
</dbReference>
<proteinExistence type="inferred from homology"/>